<name>CREA_FUSFU</name>
<sequence length="420" mass="45892">MQRAQSAVDFSNLLNPTVPADKESEKPHQGDVEMATAAVTVIKPNGPLPGVQNSENSNELPRPYKCPLCDKAFHRLEHQTRHIRTHTGEKPHACQFPGCSKKFSRSDELTRHSRIHNNPNSRRGNKAAQAHQQQQHQMHQQQGLPPHMMPDGMMAPPPAPKTIRSAPGSALASPNVSPPHSYSTFALPVSAVHYNRGGDISMLAKAATQVERETLTAPPHHSNNHRHHPYFGHGMHSSRGHLPTLSSYHMGRSHSNEDPSDDHYSGAMRHAKRSRPNSPNSTAPSSPTFSHDSLSPTPDHTPIATPAHSPRLRPFSTGYELPSLRNLSLQHNTTPALAPMEPHLEQNQFQQGSAPTTQPRPTGMSLTDIISRPDGSQRKLPVPQVPKVAVQDLLSDNGFSHSGRSSGTSSLAGGDLMDRM</sequence>
<protein>
    <recommendedName>
        <fullName>DNA-binding protein creA</fullName>
    </recommendedName>
    <alternativeName>
        <fullName>Carbon catabolite repressor</fullName>
    </alternativeName>
</protein>
<feature type="chain" id="PRO_0000046876" description="DNA-binding protein creA">
    <location>
        <begin position="1"/>
        <end position="420"/>
    </location>
</feature>
<feature type="zinc finger region" description="C2H2-type 1" evidence="2">
    <location>
        <begin position="64"/>
        <end position="86"/>
    </location>
</feature>
<feature type="zinc finger region" description="C2H2-type 2" evidence="2">
    <location>
        <begin position="92"/>
        <end position="116"/>
    </location>
</feature>
<feature type="region of interest" description="Disordered" evidence="3">
    <location>
        <begin position="1"/>
        <end position="31"/>
    </location>
</feature>
<feature type="region of interest" description="Disordered" evidence="3">
    <location>
        <begin position="97"/>
        <end position="152"/>
    </location>
</feature>
<feature type="region of interest" description="Disordered" evidence="3">
    <location>
        <begin position="212"/>
        <end position="319"/>
    </location>
</feature>
<feature type="region of interest" description="Disordered" evidence="3">
    <location>
        <begin position="346"/>
        <end position="420"/>
    </location>
</feature>
<feature type="compositionally biased region" description="Polar residues" evidence="3">
    <location>
        <begin position="1"/>
        <end position="15"/>
    </location>
</feature>
<feature type="compositionally biased region" description="Basic and acidic residues" evidence="3">
    <location>
        <begin position="20"/>
        <end position="31"/>
    </location>
</feature>
<feature type="compositionally biased region" description="Low complexity" evidence="3">
    <location>
        <begin position="127"/>
        <end position="152"/>
    </location>
</feature>
<feature type="compositionally biased region" description="Basic and acidic residues" evidence="3">
    <location>
        <begin position="254"/>
        <end position="264"/>
    </location>
</feature>
<feature type="compositionally biased region" description="Low complexity" evidence="3">
    <location>
        <begin position="276"/>
        <end position="290"/>
    </location>
</feature>
<feature type="compositionally biased region" description="Polar residues" evidence="3">
    <location>
        <begin position="346"/>
        <end position="360"/>
    </location>
</feature>
<feature type="compositionally biased region" description="Low complexity" evidence="3">
    <location>
        <begin position="398"/>
        <end position="414"/>
    </location>
</feature>
<proteinExistence type="inferred from homology"/>
<keyword id="KW-0238">DNA-binding</keyword>
<keyword id="KW-0479">Metal-binding</keyword>
<keyword id="KW-0539">Nucleus</keyword>
<keyword id="KW-0677">Repeat</keyword>
<keyword id="KW-0678">Repressor</keyword>
<keyword id="KW-0804">Transcription</keyword>
<keyword id="KW-0805">Transcription regulation</keyword>
<keyword id="KW-0862">Zinc</keyword>
<keyword id="KW-0863">Zinc-finger</keyword>
<comment type="function">
    <text evidence="1">Involved in carbon catabolite repression. Represses the transcription of a number of genes by binding to a GC-rich region in their promoter (By similarity).</text>
</comment>
<comment type="subcellular location">
    <subcellularLocation>
        <location>Nucleus</location>
    </subcellularLocation>
</comment>
<comment type="similarity">
    <text evidence="4">Belongs to the creA/MIG C2H2-type zinc-finger protein family.</text>
</comment>
<reference key="1">
    <citation type="journal article" date="2000" name="FEMS Microbiol. Lett.">
        <title>Carbon catabolite repression in plant pathogenic fungi: isolation and characterization of the Gibberella fujikuroi and Botrytis cinerea creA genes.</title>
        <authorList>
            <person name="Tudzynski B."/>
            <person name="Liu S."/>
            <person name="Kelly J.M."/>
        </authorList>
    </citation>
    <scope>NUCLEOTIDE SEQUENCE [GENOMIC DNA]</scope>
    <source>
        <strain>m567</strain>
    </source>
</reference>
<dbReference type="EMBL" id="Y16626">
    <property type="protein sequence ID" value="CAA76330.1"/>
    <property type="molecule type" value="Genomic_DNA"/>
</dbReference>
<dbReference type="SMR" id="O94131"/>
<dbReference type="EnsemblFungi" id="CCT64031">
    <property type="protein sequence ID" value="CCT64031"/>
    <property type="gene ID" value="FFUJ_04790"/>
</dbReference>
<dbReference type="eggNOG" id="KOG1721">
    <property type="taxonomic scope" value="Eukaryota"/>
</dbReference>
<dbReference type="HOGENOM" id="CLU_036230_0_0_1"/>
<dbReference type="OrthoDB" id="654211at2759"/>
<dbReference type="GO" id="GO:0005737">
    <property type="term" value="C:cytoplasm"/>
    <property type="evidence" value="ECO:0007669"/>
    <property type="project" value="TreeGrafter"/>
</dbReference>
<dbReference type="GO" id="GO:0005634">
    <property type="term" value="C:nucleus"/>
    <property type="evidence" value="ECO:0007669"/>
    <property type="project" value="UniProtKB-SubCell"/>
</dbReference>
<dbReference type="GO" id="GO:0000978">
    <property type="term" value="F:RNA polymerase II cis-regulatory region sequence-specific DNA binding"/>
    <property type="evidence" value="ECO:0007669"/>
    <property type="project" value="TreeGrafter"/>
</dbReference>
<dbReference type="GO" id="GO:0008270">
    <property type="term" value="F:zinc ion binding"/>
    <property type="evidence" value="ECO:0007669"/>
    <property type="project" value="UniProtKB-KW"/>
</dbReference>
<dbReference type="GO" id="GO:0000433">
    <property type="term" value="P:carbon catabolite repression of transcription from RNA polymerase II promoter by glucose"/>
    <property type="evidence" value="ECO:0007669"/>
    <property type="project" value="TreeGrafter"/>
</dbReference>
<dbReference type="FunFam" id="3.30.160.60:FF:000089">
    <property type="entry name" value="DNA-binding protein creA"/>
    <property type="match status" value="1"/>
</dbReference>
<dbReference type="FunFam" id="3.30.160.60:FF:000152">
    <property type="entry name" value="DNA-binding protein creA"/>
    <property type="match status" value="1"/>
</dbReference>
<dbReference type="Gene3D" id="3.30.160.60">
    <property type="entry name" value="Classic Zinc Finger"/>
    <property type="match status" value="2"/>
</dbReference>
<dbReference type="InterPro" id="IPR051007">
    <property type="entry name" value="creA/MIG_C2H2-ZnF"/>
</dbReference>
<dbReference type="InterPro" id="IPR036236">
    <property type="entry name" value="Znf_C2H2_sf"/>
</dbReference>
<dbReference type="InterPro" id="IPR013087">
    <property type="entry name" value="Znf_C2H2_type"/>
</dbReference>
<dbReference type="PANTHER" id="PTHR47428">
    <property type="entry name" value="REGULATORY PROTEIN MIG1-RELATED"/>
    <property type="match status" value="1"/>
</dbReference>
<dbReference type="PANTHER" id="PTHR47428:SF1">
    <property type="entry name" value="REGULATORY PROTEIN MIG1-RELATED"/>
    <property type="match status" value="1"/>
</dbReference>
<dbReference type="Pfam" id="PF00096">
    <property type="entry name" value="zf-C2H2"/>
    <property type="match status" value="2"/>
</dbReference>
<dbReference type="SMART" id="SM00355">
    <property type="entry name" value="ZnF_C2H2"/>
    <property type="match status" value="2"/>
</dbReference>
<dbReference type="SUPFAM" id="SSF57667">
    <property type="entry name" value="beta-beta-alpha zinc fingers"/>
    <property type="match status" value="1"/>
</dbReference>
<dbReference type="PROSITE" id="PS00028">
    <property type="entry name" value="ZINC_FINGER_C2H2_1"/>
    <property type="match status" value="2"/>
</dbReference>
<dbReference type="PROSITE" id="PS50157">
    <property type="entry name" value="ZINC_FINGER_C2H2_2"/>
    <property type="match status" value="2"/>
</dbReference>
<evidence type="ECO:0000250" key="1"/>
<evidence type="ECO:0000255" key="2">
    <source>
        <dbReference type="PROSITE-ProRule" id="PRU00042"/>
    </source>
</evidence>
<evidence type="ECO:0000256" key="3">
    <source>
        <dbReference type="SAM" id="MobiDB-lite"/>
    </source>
</evidence>
<evidence type="ECO:0000305" key="4"/>
<gene>
    <name type="primary">CREA</name>
</gene>
<accession>O94131</accession>
<organism>
    <name type="scientific">Fusarium fujikuroi</name>
    <name type="common">Bakanae and foot rot disease fungus</name>
    <name type="synonym">Gibberella fujikuroi</name>
    <dbReference type="NCBI Taxonomy" id="5127"/>
    <lineage>
        <taxon>Eukaryota</taxon>
        <taxon>Fungi</taxon>
        <taxon>Dikarya</taxon>
        <taxon>Ascomycota</taxon>
        <taxon>Pezizomycotina</taxon>
        <taxon>Sordariomycetes</taxon>
        <taxon>Hypocreomycetidae</taxon>
        <taxon>Hypocreales</taxon>
        <taxon>Nectriaceae</taxon>
        <taxon>Fusarium</taxon>
        <taxon>Fusarium fujikuroi species complex</taxon>
    </lineage>
</organism>